<comment type="function">
    <text evidence="1">ATPase subunit of a proteasome-like degradation complex; this subunit has chaperone activity. The binding of ATP and its subsequent hydrolysis by HslU are essential for unfolding of protein substrates subsequently hydrolyzed by HslV. HslU recognizes the N-terminal part of its protein substrates and unfolds these before they are guided to HslV for hydrolysis.</text>
</comment>
<comment type="subunit">
    <text evidence="1">A double ring-shaped homohexamer of HslV is capped on each side by a ring-shaped HslU homohexamer. The assembly of the HslU/HslV complex is dependent on binding of ATP.</text>
</comment>
<comment type="subcellular location">
    <subcellularLocation>
        <location evidence="1">Cytoplasm</location>
    </subcellularLocation>
</comment>
<comment type="similarity">
    <text evidence="1">Belongs to the ClpX chaperone family. HslU subfamily.</text>
</comment>
<dbReference type="EMBL" id="AL111168">
    <property type="protein sequence ID" value="CAL34803.1"/>
    <property type="molecule type" value="Genomic_DNA"/>
</dbReference>
<dbReference type="PIR" id="H81414">
    <property type="entry name" value="H81414"/>
</dbReference>
<dbReference type="RefSeq" id="WP_002852226.1">
    <property type="nucleotide sequence ID" value="NZ_SZUC01000002.1"/>
</dbReference>
<dbReference type="RefSeq" id="YP_002344086.1">
    <property type="nucleotide sequence ID" value="NC_002163.1"/>
</dbReference>
<dbReference type="SMR" id="Q9PHL0"/>
<dbReference type="IntAct" id="Q9PHL0">
    <property type="interactions" value="28"/>
</dbReference>
<dbReference type="STRING" id="192222.Cj0662c"/>
<dbReference type="PaxDb" id="192222-Cj0662c"/>
<dbReference type="EnsemblBacteria" id="CAL34803">
    <property type="protein sequence ID" value="CAL34803"/>
    <property type="gene ID" value="Cj0662c"/>
</dbReference>
<dbReference type="GeneID" id="904984"/>
<dbReference type="KEGG" id="cje:Cj0662c"/>
<dbReference type="PATRIC" id="fig|192222.6.peg.654"/>
<dbReference type="eggNOG" id="COG1220">
    <property type="taxonomic scope" value="Bacteria"/>
</dbReference>
<dbReference type="HOGENOM" id="CLU_033123_0_0_7"/>
<dbReference type="OrthoDB" id="9804062at2"/>
<dbReference type="Proteomes" id="UP000000799">
    <property type="component" value="Chromosome"/>
</dbReference>
<dbReference type="GO" id="GO:0009376">
    <property type="term" value="C:HslUV protease complex"/>
    <property type="evidence" value="ECO:0007669"/>
    <property type="project" value="UniProtKB-UniRule"/>
</dbReference>
<dbReference type="GO" id="GO:0005524">
    <property type="term" value="F:ATP binding"/>
    <property type="evidence" value="ECO:0007669"/>
    <property type="project" value="UniProtKB-UniRule"/>
</dbReference>
<dbReference type="GO" id="GO:0016887">
    <property type="term" value="F:ATP hydrolysis activity"/>
    <property type="evidence" value="ECO:0007669"/>
    <property type="project" value="InterPro"/>
</dbReference>
<dbReference type="GO" id="GO:0008233">
    <property type="term" value="F:peptidase activity"/>
    <property type="evidence" value="ECO:0007669"/>
    <property type="project" value="InterPro"/>
</dbReference>
<dbReference type="GO" id="GO:0036402">
    <property type="term" value="F:proteasome-activating activity"/>
    <property type="evidence" value="ECO:0007669"/>
    <property type="project" value="UniProtKB-UniRule"/>
</dbReference>
<dbReference type="GO" id="GO:0043335">
    <property type="term" value="P:protein unfolding"/>
    <property type="evidence" value="ECO:0007669"/>
    <property type="project" value="UniProtKB-UniRule"/>
</dbReference>
<dbReference type="GO" id="GO:0051603">
    <property type="term" value="P:proteolysis involved in protein catabolic process"/>
    <property type="evidence" value="ECO:0007669"/>
    <property type="project" value="TreeGrafter"/>
</dbReference>
<dbReference type="Gene3D" id="1.10.8.60">
    <property type="match status" value="1"/>
</dbReference>
<dbReference type="Gene3D" id="3.40.50.300">
    <property type="entry name" value="P-loop containing nucleotide triphosphate hydrolases"/>
    <property type="match status" value="2"/>
</dbReference>
<dbReference type="HAMAP" id="MF_00249">
    <property type="entry name" value="HslU"/>
    <property type="match status" value="1"/>
</dbReference>
<dbReference type="InterPro" id="IPR003593">
    <property type="entry name" value="AAA+_ATPase"/>
</dbReference>
<dbReference type="InterPro" id="IPR050052">
    <property type="entry name" value="ATP-dep_Clp_protease_ClpX"/>
</dbReference>
<dbReference type="InterPro" id="IPR003959">
    <property type="entry name" value="ATPase_AAA_core"/>
</dbReference>
<dbReference type="InterPro" id="IPR019489">
    <property type="entry name" value="Clp_ATPase_C"/>
</dbReference>
<dbReference type="InterPro" id="IPR004491">
    <property type="entry name" value="HslU"/>
</dbReference>
<dbReference type="InterPro" id="IPR027417">
    <property type="entry name" value="P-loop_NTPase"/>
</dbReference>
<dbReference type="NCBIfam" id="TIGR00390">
    <property type="entry name" value="hslU"/>
    <property type="match status" value="1"/>
</dbReference>
<dbReference type="NCBIfam" id="NF003544">
    <property type="entry name" value="PRK05201.1"/>
    <property type="match status" value="1"/>
</dbReference>
<dbReference type="PANTHER" id="PTHR48102">
    <property type="entry name" value="ATP-DEPENDENT CLP PROTEASE ATP-BINDING SUBUNIT CLPX-LIKE, MITOCHONDRIAL-RELATED"/>
    <property type="match status" value="1"/>
</dbReference>
<dbReference type="PANTHER" id="PTHR48102:SF3">
    <property type="entry name" value="ATP-DEPENDENT PROTEASE ATPASE SUBUNIT HSLU"/>
    <property type="match status" value="1"/>
</dbReference>
<dbReference type="Pfam" id="PF00004">
    <property type="entry name" value="AAA"/>
    <property type="match status" value="1"/>
</dbReference>
<dbReference type="Pfam" id="PF07724">
    <property type="entry name" value="AAA_2"/>
    <property type="match status" value="1"/>
</dbReference>
<dbReference type="Pfam" id="PF10431">
    <property type="entry name" value="ClpB_D2-small"/>
    <property type="match status" value="1"/>
</dbReference>
<dbReference type="SMART" id="SM00382">
    <property type="entry name" value="AAA"/>
    <property type="match status" value="1"/>
</dbReference>
<dbReference type="SMART" id="SM01086">
    <property type="entry name" value="ClpB_D2-small"/>
    <property type="match status" value="1"/>
</dbReference>
<dbReference type="SUPFAM" id="SSF52540">
    <property type="entry name" value="P-loop containing nucleoside triphosphate hydrolases"/>
    <property type="match status" value="1"/>
</dbReference>
<reference key="1">
    <citation type="journal article" date="2000" name="Nature">
        <title>The genome sequence of the food-borne pathogen Campylobacter jejuni reveals hypervariable sequences.</title>
        <authorList>
            <person name="Parkhill J."/>
            <person name="Wren B.W."/>
            <person name="Mungall K.L."/>
            <person name="Ketley J.M."/>
            <person name="Churcher C.M."/>
            <person name="Basham D."/>
            <person name="Chillingworth T."/>
            <person name="Davies R.M."/>
            <person name="Feltwell T."/>
            <person name="Holroyd S."/>
            <person name="Jagels K."/>
            <person name="Karlyshev A.V."/>
            <person name="Moule S."/>
            <person name="Pallen M.J."/>
            <person name="Penn C.W."/>
            <person name="Quail M.A."/>
            <person name="Rajandream M.A."/>
            <person name="Rutherford K.M."/>
            <person name="van Vliet A.H.M."/>
            <person name="Whitehead S."/>
            <person name="Barrell B.G."/>
        </authorList>
    </citation>
    <scope>NUCLEOTIDE SEQUENCE [LARGE SCALE GENOMIC DNA]</scope>
    <source>
        <strain>ATCC 700819 / NCTC 11168</strain>
    </source>
</reference>
<keyword id="KW-0067">ATP-binding</keyword>
<keyword id="KW-0143">Chaperone</keyword>
<keyword id="KW-0963">Cytoplasm</keyword>
<keyword id="KW-0547">Nucleotide-binding</keyword>
<keyword id="KW-1185">Reference proteome</keyword>
<name>HSLU_CAMJE</name>
<gene>
    <name evidence="1" type="primary">hslU</name>
    <name type="ordered locus">Cj0662c</name>
</gene>
<protein>
    <recommendedName>
        <fullName evidence="1">ATP-dependent protease ATPase subunit HslU</fullName>
    </recommendedName>
    <alternativeName>
        <fullName evidence="1">Unfoldase HslU</fullName>
    </alternativeName>
</protein>
<evidence type="ECO:0000255" key="1">
    <source>
        <dbReference type="HAMAP-Rule" id="MF_00249"/>
    </source>
</evidence>
<sequence length="439" mass="49780">MNLTPKEIVKFLDDYVIGQKKAKKIIAIALRNRYRRMQLSPELQDDIVPKNILMIGSTGVGKTEIARRLAKMMGFPFIKIEASKYTEVGFVGRDVESMVRDLANAALNLVKNEQREKNKDKIDEFIENKILEKLLPPLPKGISDEKQEEYKNSLEKMRTKLRNGDLDESTIEIEISQNMFDTNPNLPPEMGAMQDIVKVIGVGSKKVKKEMKIKDAKNALKNEAGEKILDQESIKSEALKRAENEGIIFIDEIDKIAVSSGNSNRQDPSKEGVQRDLLPIVEGSNVQTKIGTLKTDHILFIAAGAFHLSKPSDLIPELQGRFPLRVELDSLDDKALYEILTRPKNSLLKQYSQLLKTENLELEFDDEAIKEIAKIASRANEEMQDIGARRLHTVIEKLLEDLSFEADEYAGKKFVVDKKMVEEKLGDIIENKDLARYIL</sequence>
<accession>Q9PHL0</accession>
<accession>Q0PAL1</accession>
<proteinExistence type="inferred from homology"/>
<organism>
    <name type="scientific">Campylobacter jejuni subsp. jejuni serotype O:2 (strain ATCC 700819 / NCTC 11168)</name>
    <dbReference type="NCBI Taxonomy" id="192222"/>
    <lineage>
        <taxon>Bacteria</taxon>
        <taxon>Pseudomonadati</taxon>
        <taxon>Campylobacterota</taxon>
        <taxon>Epsilonproteobacteria</taxon>
        <taxon>Campylobacterales</taxon>
        <taxon>Campylobacteraceae</taxon>
        <taxon>Campylobacter</taxon>
    </lineage>
</organism>
<feature type="chain" id="PRO_0000160492" description="ATP-dependent protease ATPase subunit HslU">
    <location>
        <begin position="1"/>
        <end position="439"/>
    </location>
</feature>
<feature type="binding site" evidence="1">
    <location>
        <position position="17"/>
    </location>
    <ligand>
        <name>ATP</name>
        <dbReference type="ChEBI" id="CHEBI:30616"/>
    </ligand>
</feature>
<feature type="binding site" evidence="1">
    <location>
        <begin position="59"/>
        <end position="64"/>
    </location>
    <ligand>
        <name>ATP</name>
        <dbReference type="ChEBI" id="CHEBI:30616"/>
    </ligand>
</feature>
<feature type="binding site" evidence="1">
    <location>
        <position position="251"/>
    </location>
    <ligand>
        <name>ATP</name>
        <dbReference type="ChEBI" id="CHEBI:30616"/>
    </ligand>
</feature>
<feature type="binding site" evidence="1">
    <location>
        <position position="317"/>
    </location>
    <ligand>
        <name>ATP</name>
        <dbReference type="ChEBI" id="CHEBI:30616"/>
    </ligand>
</feature>
<feature type="binding site" evidence="1">
    <location>
        <position position="389"/>
    </location>
    <ligand>
        <name>ATP</name>
        <dbReference type="ChEBI" id="CHEBI:30616"/>
    </ligand>
</feature>